<feature type="transit peptide" description="Mitochondrion" evidence="1">
    <location>
        <begin position="1"/>
        <end position="66"/>
    </location>
</feature>
<feature type="chain" id="PRO_0000402859" description="Translation factor GUF1 homolog, mitochondrial">
    <location>
        <begin position="67"/>
        <end position="834"/>
    </location>
</feature>
<feature type="domain" description="tr-type G">
    <location>
        <begin position="129"/>
        <end position="314"/>
    </location>
</feature>
<feature type="region of interest" description="Disordered" evidence="2">
    <location>
        <begin position="475"/>
        <end position="507"/>
    </location>
</feature>
<feature type="compositionally biased region" description="Low complexity" evidence="2">
    <location>
        <begin position="488"/>
        <end position="507"/>
    </location>
</feature>
<feature type="binding site" evidence="1">
    <location>
        <begin position="138"/>
        <end position="145"/>
    </location>
    <ligand>
        <name>GTP</name>
        <dbReference type="ChEBI" id="CHEBI:37565"/>
    </ligand>
</feature>
<feature type="binding site" evidence="1">
    <location>
        <begin position="205"/>
        <end position="209"/>
    </location>
    <ligand>
        <name>GTP</name>
        <dbReference type="ChEBI" id="CHEBI:37565"/>
    </ligand>
</feature>
<feature type="binding site" evidence="1">
    <location>
        <begin position="259"/>
        <end position="262"/>
    </location>
    <ligand>
        <name>GTP</name>
        <dbReference type="ChEBI" id="CHEBI:37565"/>
    </ligand>
</feature>
<accession>Q4Q3F0</accession>
<evidence type="ECO:0000255" key="1">
    <source>
        <dbReference type="HAMAP-Rule" id="MF_03137"/>
    </source>
</evidence>
<evidence type="ECO:0000256" key="2">
    <source>
        <dbReference type="SAM" id="MobiDB-lite"/>
    </source>
</evidence>
<evidence type="ECO:0000305" key="3"/>
<reference key="1">
    <citation type="journal article" date="2005" name="Science">
        <title>The genome of the kinetoplastid parasite, Leishmania major.</title>
        <authorList>
            <person name="Ivens A.C."/>
            <person name="Peacock C.S."/>
            <person name="Worthey E.A."/>
            <person name="Murphy L."/>
            <person name="Aggarwal G."/>
            <person name="Berriman M."/>
            <person name="Sisk E."/>
            <person name="Rajandream M.A."/>
            <person name="Adlem E."/>
            <person name="Aert R."/>
            <person name="Anupama A."/>
            <person name="Apostolou Z."/>
            <person name="Attipoe P."/>
            <person name="Bason N."/>
            <person name="Bauser C."/>
            <person name="Beck A."/>
            <person name="Beverley S.M."/>
            <person name="Bianchettin G."/>
            <person name="Borzym K."/>
            <person name="Bothe G."/>
            <person name="Bruschi C.V."/>
            <person name="Collins M."/>
            <person name="Cadag E."/>
            <person name="Ciarloni L."/>
            <person name="Clayton C."/>
            <person name="Coulson R.M.R."/>
            <person name="Cronin A."/>
            <person name="Cruz A.K."/>
            <person name="Davies R.M."/>
            <person name="De Gaudenzi J."/>
            <person name="Dobson D.E."/>
            <person name="Duesterhoeft A."/>
            <person name="Fazelina G."/>
            <person name="Fosker N."/>
            <person name="Frasch A.C."/>
            <person name="Fraser A."/>
            <person name="Fuchs M."/>
            <person name="Gabel C."/>
            <person name="Goble A."/>
            <person name="Goffeau A."/>
            <person name="Harris D."/>
            <person name="Hertz-Fowler C."/>
            <person name="Hilbert H."/>
            <person name="Horn D."/>
            <person name="Huang Y."/>
            <person name="Klages S."/>
            <person name="Knights A."/>
            <person name="Kube M."/>
            <person name="Larke N."/>
            <person name="Litvin L."/>
            <person name="Lord A."/>
            <person name="Louie T."/>
            <person name="Marra M."/>
            <person name="Masuy D."/>
            <person name="Matthews K."/>
            <person name="Michaeli S."/>
            <person name="Mottram J.C."/>
            <person name="Mueller-Auer S."/>
            <person name="Munden H."/>
            <person name="Nelson S."/>
            <person name="Norbertczak H."/>
            <person name="Oliver K."/>
            <person name="O'neil S."/>
            <person name="Pentony M."/>
            <person name="Pohl T.M."/>
            <person name="Price C."/>
            <person name="Purnelle B."/>
            <person name="Quail M.A."/>
            <person name="Rabbinowitsch E."/>
            <person name="Reinhardt R."/>
            <person name="Rieger M."/>
            <person name="Rinta J."/>
            <person name="Robben J."/>
            <person name="Robertson L."/>
            <person name="Ruiz J.C."/>
            <person name="Rutter S."/>
            <person name="Saunders D."/>
            <person name="Schaefer M."/>
            <person name="Schein J."/>
            <person name="Schwartz D.C."/>
            <person name="Seeger K."/>
            <person name="Seyler A."/>
            <person name="Sharp S."/>
            <person name="Shin H."/>
            <person name="Sivam D."/>
            <person name="Squares R."/>
            <person name="Squares S."/>
            <person name="Tosato V."/>
            <person name="Vogt C."/>
            <person name="Volckaert G."/>
            <person name="Wambutt R."/>
            <person name="Warren T."/>
            <person name="Wedler H."/>
            <person name="Woodward J."/>
            <person name="Zhou S."/>
            <person name="Zimmermann W."/>
            <person name="Smith D.F."/>
            <person name="Blackwell J.M."/>
            <person name="Stuart K.D."/>
            <person name="Barrell B.G."/>
            <person name="Myler P.J."/>
        </authorList>
    </citation>
    <scope>NUCLEOTIDE SEQUENCE [LARGE SCALE GENOMIC DNA]</scope>
    <source>
        <strain>MHOM/IL/81/Friedlin</strain>
    </source>
</reference>
<gene>
    <name type="ORF">LmjF34.0570</name>
    <name type="ORF">LmjF_34_0570</name>
</gene>
<proteinExistence type="inferred from homology"/>
<comment type="function">
    <text evidence="1">Promotes mitochondrial protein synthesis. May act as a fidelity factor of the translation reaction, by catalyzing a one-codon backward translocation of tRNAs on improperly translocated ribosomes. Binds to mitochondrial ribosomes in a GTP-dependent manner.</text>
</comment>
<comment type="catalytic activity">
    <reaction evidence="1">
        <text>GTP + H2O = GDP + phosphate + H(+)</text>
        <dbReference type="Rhea" id="RHEA:19669"/>
        <dbReference type="ChEBI" id="CHEBI:15377"/>
        <dbReference type="ChEBI" id="CHEBI:15378"/>
        <dbReference type="ChEBI" id="CHEBI:37565"/>
        <dbReference type="ChEBI" id="CHEBI:43474"/>
        <dbReference type="ChEBI" id="CHEBI:58189"/>
    </reaction>
</comment>
<comment type="subcellular location">
    <subcellularLocation>
        <location evidence="1">Mitochondrion inner membrane</location>
        <topology evidence="1">Peripheral membrane protein</topology>
        <orientation evidence="1">Matrix side</orientation>
    </subcellularLocation>
</comment>
<comment type="similarity">
    <text evidence="3">Belongs to the TRAFAC class translation factor GTPase superfamily. Classic translation factor GTPase family. LepA subfamily.</text>
</comment>
<organism>
    <name type="scientific">Leishmania major</name>
    <dbReference type="NCBI Taxonomy" id="5664"/>
    <lineage>
        <taxon>Eukaryota</taxon>
        <taxon>Discoba</taxon>
        <taxon>Euglenozoa</taxon>
        <taxon>Kinetoplastea</taxon>
        <taxon>Metakinetoplastina</taxon>
        <taxon>Trypanosomatida</taxon>
        <taxon>Trypanosomatidae</taxon>
        <taxon>Leishmaniinae</taxon>
        <taxon>Leishmania</taxon>
    </lineage>
</organism>
<keyword id="KW-0342">GTP-binding</keyword>
<keyword id="KW-0378">Hydrolase</keyword>
<keyword id="KW-0472">Membrane</keyword>
<keyword id="KW-0496">Mitochondrion</keyword>
<keyword id="KW-0999">Mitochondrion inner membrane</keyword>
<keyword id="KW-0547">Nucleotide-binding</keyword>
<keyword id="KW-0648">Protein biosynthesis</keyword>
<keyword id="KW-1185">Reference proteome</keyword>
<keyword id="KW-0809">Transit peptide</keyword>
<dbReference type="EC" id="3.6.5.-"/>
<dbReference type="EMBL" id="FR796430">
    <property type="protein sequence ID" value="CAJ07762.1"/>
    <property type="molecule type" value="Genomic_DNA"/>
</dbReference>
<dbReference type="RefSeq" id="XP_001686148.1">
    <property type="nucleotide sequence ID" value="XM_001686096.1"/>
</dbReference>
<dbReference type="SMR" id="Q4Q3F0"/>
<dbReference type="FunCoup" id="Q4Q3F0">
    <property type="interactions" value="195"/>
</dbReference>
<dbReference type="STRING" id="5664.Q4Q3F0"/>
<dbReference type="EnsemblProtists" id="CAJ07762">
    <property type="protein sequence ID" value="CAJ07762"/>
    <property type="gene ID" value="LMJF_34_0570"/>
</dbReference>
<dbReference type="GeneID" id="5654812"/>
<dbReference type="KEGG" id="lma:LMJF_34_0570"/>
<dbReference type="VEuPathDB" id="TriTrypDB:LmjF.34.0570"/>
<dbReference type="VEuPathDB" id="TriTrypDB:LMJFC_340012200"/>
<dbReference type="VEuPathDB" id="TriTrypDB:LMJLV39_340011900"/>
<dbReference type="VEuPathDB" id="TriTrypDB:LMJSD75_340011600"/>
<dbReference type="eggNOG" id="KOG0462">
    <property type="taxonomic scope" value="Eukaryota"/>
</dbReference>
<dbReference type="InParanoid" id="Q4Q3F0"/>
<dbReference type="OMA" id="QVKCDEN"/>
<dbReference type="Proteomes" id="UP000000542">
    <property type="component" value="Chromosome 34"/>
</dbReference>
<dbReference type="GO" id="GO:0005743">
    <property type="term" value="C:mitochondrial inner membrane"/>
    <property type="evidence" value="ECO:0007669"/>
    <property type="project" value="UniProtKB-SubCell"/>
</dbReference>
<dbReference type="GO" id="GO:0005759">
    <property type="term" value="C:mitochondrial matrix"/>
    <property type="evidence" value="ECO:0007669"/>
    <property type="project" value="UniProtKB-UniRule"/>
</dbReference>
<dbReference type="GO" id="GO:0005739">
    <property type="term" value="C:mitochondrion"/>
    <property type="evidence" value="ECO:0000318"/>
    <property type="project" value="GO_Central"/>
</dbReference>
<dbReference type="GO" id="GO:0005525">
    <property type="term" value="F:GTP binding"/>
    <property type="evidence" value="ECO:0007669"/>
    <property type="project" value="UniProtKB-UniRule"/>
</dbReference>
<dbReference type="GO" id="GO:0003924">
    <property type="term" value="F:GTPase activity"/>
    <property type="evidence" value="ECO:0007669"/>
    <property type="project" value="UniProtKB-UniRule"/>
</dbReference>
<dbReference type="GO" id="GO:0097177">
    <property type="term" value="F:mitochondrial ribosome binding"/>
    <property type="evidence" value="ECO:0000318"/>
    <property type="project" value="GO_Central"/>
</dbReference>
<dbReference type="GO" id="GO:0045727">
    <property type="term" value="P:positive regulation of translation"/>
    <property type="evidence" value="ECO:0000318"/>
    <property type="project" value="GO_Central"/>
</dbReference>
<dbReference type="GO" id="GO:0006412">
    <property type="term" value="P:translation"/>
    <property type="evidence" value="ECO:0007669"/>
    <property type="project" value="UniProtKB-KW"/>
</dbReference>
<dbReference type="CDD" id="cd01890">
    <property type="entry name" value="LepA"/>
    <property type="match status" value="1"/>
</dbReference>
<dbReference type="CDD" id="cd03709">
    <property type="entry name" value="lepA_C"/>
    <property type="match status" value="1"/>
</dbReference>
<dbReference type="FunFam" id="2.40.30.10:FF:000187">
    <property type="entry name" value="Translation factor GUF1 homolog, mitochondrial"/>
    <property type="match status" value="1"/>
</dbReference>
<dbReference type="FunFam" id="3.40.50.300:FF:002566">
    <property type="entry name" value="Translation factor GUF1 homolog, mitochondrial"/>
    <property type="match status" value="1"/>
</dbReference>
<dbReference type="FunFam" id="3.30.70.240:FF:000007">
    <property type="entry name" value="Translation factor GUF1, mitochondrial"/>
    <property type="match status" value="1"/>
</dbReference>
<dbReference type="FunFam" id="3.30.70.2570:FF:000001">
    <property type="entry name" value="Translation factor GUF1, mitochondrial"/>
    <property type="match status" value="1"/>
</dbReference>
<dbReference type="Gene3D" id="3.30.70.240">
    <property type="match status" value="1"/>
</dbReference>
<dbReference type="Gene3D" id="3.30.70.2570">
    <property type="entry name" value="Elongation factor 4, C-terminal domain"/>
    <property type="match status" value="1"/>
</dbReference>
<dbReference type="Gene3D" id="3.30.70.870">
    <property type="entry name" value="Elongation Factor G (Translational Gtpase), domain 3"/>
    <property type="match status" value="1"/>
</dbReference>
<dbReference type="Gene3D" id="3.40.50.300">
    <property type="entry name" value="P-loop containing nucleotide triphosphate hydrolases"/>
    <property type="match status" value="1"/>
</dbReference>
<dbReference type="Gene3D" id="2.40.30.10">
    <property type="entry name" value="Translation factors"/>
    <property type="match status" value="1"/>
</dbReference>
<dbReference type="HAMAP" id="MF_00071">
    <property type="entry name" value="LepA"/>
    <property type="match status" value="1"/>
</dbReference>
<dbReference type="InterPro" id="IPR006297">
    <property type="entry name" value="EF-4"/>
</dbReference>
<dbReference type="InterPro" id="IPR035647">
    <property type="entry name" value="EFG_III/V"/>
</dbReference>
<dbReference type="InterPro" id="IPR000640">
    <property type="entry name" value="EFG_V-like"/>
</dbReference>
<dbReference type="InterPro" id="IPR038363">
    <property type="entry name" value="LepA_C_sf"/>
</dbReference>
<dbReference type="InterPro" id="IPR013842">
    <property type="entry name" value="LepA_CTD"/>
</dbReference>
<dbReference type="InterPro" id="IPR035654">
    <property type="entry name" value="LepA_IV"/>
</dbReference>
<dbReference type="InterPro" id="IPR027417">
    <property type="entry name" value="P-loop_NTPase"/>
</dbReference>
<dbReference type="InterPro" id="IPR005225">
    <property type="entry name" value="Small_GTP-bd"/>
</dbReference>
<dbReference type="InterPro" id="IPR000795">
    <property type="entry name" value="T_Tr_GTP-bd_dom"/>
</dbReference>
<dbReference type="InterPro" id="IPR009000">
    <property type="entry name" value="Transl_B-barrel_sf"/>
</dbReference>
<dbReference type="NCBIfam" id="TIGR00231">
    <property type="entry name" value="small_GTP"/>
    <property type="match status" value="1"/>
</dbReference>
<dbReference type="PANTHER" id="PTHR43512:SF7">
    <property type="entry name" value="TRANSLATION FACTOR GUF1, MITOCHONDRIAL"/>
    <property type="match status" value="1"/>
</dbReference>
<dbReference type="PANTHER" id="PTHR43512">
    <property type="entry name" value="TRANSLATION FACTOR GUF1-RELATED"/>
    <property type="match status" value="1"/>
</dbReference>
<dbReference type="Pfam" id="PF00679">
    <property type="entry name" value="EFG_C"/>
    <property type="match status" value="1"/>
</dbReference>
<dbReference type="Pfam" id="PF00009">
    <property type="entry name" value="GTP_EFTU"/>
    <property type="match status" value="1"/>
</dbReference>
<dbReference type="Pfam" id="PF06421">
    <property type="entry name" value="LepA_C"/>
    <property type="match status" value="1"/>
</dbReference>
<dbReference type="PRINTS" id="PR00315">
    <property type="entry name" value="ELONGATNFCT"/>
</dbReference>
<dbReference type="SUPFAM" id="SSF54980">
    <property type="entry name" value="EF-G C-terminal domain-like"/>
    <property type="match status" value="2"/>
</dbReference>
<dbReference type="SUPFAM" id="SSF52540">
    <property type="entry name" value="P-loop containing nucleoside triphosphate hydrolases"/>
    <property type="match status" value="1"/>
</dbReference>
<dbReference type="SUPFAM" id="SSF50447">
    <property type="entry name" value="Translation proteins"/>
    <property type="match status" value="1"/>
</dbReference>
<dbReference type="PROSITE" id="PS00301">
    <property type="entry name" value="G_TR_1"/>
    <property type="match status" value="1"/>
</dbReference>
<dbReference type="PROSITE" id="PS51722">
    <property type="entry name" value="G_TR_2"/>
    <property type="match status" value="1"/>
</dbReference>
<sequence length="834" mass="90530">MKLCGVRGSGVSLMRSSNFPCFRAAHNGGAPTATRHQSLCGRCLDSHMGAGKRWCFRPLLAEPRRYGSASSASTTDAATAPVHGEDLYVSHYAIPEDARRLVGTPQLLPRNPAEEVAFKKNLIRSFPQACIRNVSVVAHVDHGKTTLSDAMLRFSNLLPADGATGTFTDRLKVEKERGITIKAQTCSVLLTVRETGTQYLVNLIDTPGHVDFQYEVSRSLCASEGAALLVDVRQGVEAQTMAQFYAALEQNLTILPVLTKMDNVMSDAEVEKTLLQLEDSTGLLSREVILTSAKSKQGIEQLFQQIIDKVPPPRGREGFSDMKQLPAMHPDSADRKKVEKELVPLRALLFDCWTSESSGMTDGAASAPVSTVSSVSSGTTAASGGQSVAKDGIYGLIRVMDGTVTPGTTVTFFHSGKKHEVREVGIIHPTLHPTAALTAGMVGFVFFPGLLKKDVFIGDTLCTLPTRKHTMRVVATGPPETASRTKPATAAETASSDDASGSSGSSVVEPIPGFKTVQPVVFAGFYPDEGVYITQLREAVDLLCVNDPSVTVEQLQCPALGPGLQLGFLGFLHMQVFKERLLMEFGQTVLVTPPQVQYMYVEQHGDPDDPAQRKPVSVSNWRWPHEGVGAYLEPFITATVLTPSEYLNEINSAALSAFRGEMQEMRVIDGARTLVRYRMPLADLARGFFSTVKSSSHGYATLEYDDPTYMTADLVKMDIVINKAHISALSTICLRHEATTHARRIIGSLKENLLRSSVDLPLQALVGSKIIARETVKAYRKDVTAKIHAGDISRKQKKWNDQKKGKERMARRSVGTVTLDQSVLAAALGATTAR</sequence>
<protein>
    <recommendedName>
        <fullName evidence="1">Translation factor GUF1 homolog, mitochondrial</fullName>
        <ecNumber>3.6.5.-</ecNumber>
    </recommendedName>
    <alternativeName>
        <fullName evidence="1">Elongation factor 4 homolog</fullName>
        <shortName evidence="1">EF-4</shortName>
    </alternativeName>
    <alternativeName>
        <fullName evidence="1">GTPase GUF1 homolog</fullName>
    </alternativeName>
    <alternativeName>
        <fullName evidence="1">Ribosomal back-translocase</fullName>
    </alternativeName>
</protein>
<name>GUF1_LEIMA</name>